<gene>
    <name type="primary">RPS20</name>
</gene>
<protein>
    <recommendedName>
        <fullName evidence="6">Small ribosomal subunit protein bS20c</fullName>
    </recommendedName>
    <alternativeName>
        <fullName evidence="5">30S ribosomal protein S20, chloroplastic</fullName>
    </alternativeName>
</protein>
<comment type="function">
    <text evidence="7 8">Component of the chloroplast ribosome (chloro-ribosome), a dedicated translation machinery responsible for the synthesis of chloroplast genome-encoded proteins, including proteins of the transcription and translation machinery and components of the photosynthetic apparatus.</text>
</comment>
<comment type="subunit">
    <text evidence="3 4">Component of the chloroplast small ribosomal subunit (SSU). Mature 70S chloroplast ribosomes of higher plants consist of a small (30S) and a large (50S) subunit. The 30S small subunit contains 1 molecule of ribosomal RNA (16S rRNA) and 24 different proteins. The 50S large subunit contains 3 rRNA molecules (23S, 5S and 4.5S rRNA) and 33 different proteins.</text>
</comment>
<comment type="subcellular location">
    <subcellularLocation>
        <location evidence="3 4">Plastid</location>
        <location evidence="3 4">Chloroplast</location>
    </subcellularLocation>
</comment>
<comment type="mass spectrometry"/>
<comment type="mass spectrometry"/>
<comment type="similarity">
    <text evidence="1">Belongs to the bacterial ribosomal protein bS20 family.</text>
</comment>
<feature type="transit peptide" description="Chloroplast" evidence="3">
    <location>
        <begin position="1"/>
        <end position="68"/>
    </location>
</feature>
<feature type="chain" id="PRO_0000249413" description="Small ribosomal subunit protein bS20c">
    <location>
        <begin position="69"/>
        <end position="183"/>
    </location>
</feature>
<feature type="region of interest" description="Disordered" evidence="2">
    <location>
        <begin position="79"/>
        <end position="99"/>
    </location>
</feature>
<keyword id="KW-0002">3D-structure</keyword>
<keyword id="KW-0150">Chloroplast</keyword>
<keyword id="KW-0903">Direct protein sequencing</keyword>
<keyword id="KW-0934">Plastid</keyword>
<keyword id="KW-1185">Reference proteome</keyword>
<keyword id="KW-0687">Ribonucleoprotein</keyword>
<keyword id="KW-0689">Ribosomal protein</keyword>
<keyword id="KW-0694">RNA-binding</keyword>
<keyword id="KW-0699">rRNA-binding</keyword>
<keyword id="KW-0809">Transit peptide</keyword>
<evidence type="ECO:0000255" key="1"/>
<evidence type="ECO:0000256" key="2">
    <source>
        <dbReference type="SAM" id="MobiDB-lite"/>
    </source>
</evidence>
<evidence type="ECO:0000269" key="3">
    <source>
    </source>
</evidence>
<evidence type="ECO:0000269" key="4">
    <source>
    </source>
</evidence>
<evidence type="ECO:0000303" key="5">
    <source>
    </source>
</evidence>
<evidence type="ECO:0000303" key="6">
    <source>
    </source>
</evidence>
<evidence type="ECO:0000305" key="7">
    <source>
    </source>
</evidence>
<evidence type="ECO:0000305" key="8">
    <source>
    </source>
</evidence>
<sequence>MAAISMACVSSQCLSISSKLHNLSFSSTQFPNSSLKPLTFSANLSQPLFSQGCSSLGSFQRRGFSVVCEVATLKKADSAAKRTRQAETRRLRNKARKSEVKTRMRKVFEALDALKKKSGASTEELVPIDNLIAEAYSAIDKAVVKGTLHRNTAARRKSRLARNKKVVEIHHGWYTPSLAPTNV</sequence>
<accession>P82130</accession>
<organism>
    <name type="scientific">Spinacia oleracea</name>
    <name type="common">Spinach</name>
    <dbReference type="NCBI Taxonomy" id="3562"/>
    <lineage>
        <taxon>Eukaryota</taxon>
        <taxon>Viridiplantae</taxon>
        <taxon>Streptophyta</taxon>
        <taxon>Embryophyta</taxon>
        <taxon>Tracheophyta</taxon>
        <taxon>Spermatophyta</taxon>
        <taxon>Magnoliopsida</taxon>
        <taxon>eudicotyledons</taxon>
        <taxon>Gunneridae</taxon>
        <taxon>Pentapetalae</taxon>
        <taxon>Caryophyllales</taxon>
        <taxon>Chenopodiaceae</taxon>
        <taxon>Chenopodioideae</taxon>
        <taxon>Anserineae</taxon>
        <taxon>Spinacia</taxon>
    </lineage>
</organism>
<name>RR20_SPIOL</name>
<reference key="1">
    <citation type="journal article" date="2014" name="Nature">
        <title>The genome of the recently domesticated crop plant sugar beet (Beta vulgaris).</title>
        <authorList>
            <person name="Dohm J.C."/>
            <person name="Minoche A.E."/>
            <person name="Holtgraewe D."/>
            <person name="Capella-Gutierrez S."/>
            <person name="Zakrzewski F."/>
            <person name="Tafer H."/>
            <person name="Rupp O."/>
            <person name="Soerensen T.R."/>
            <person name="Stracke R."/>
            <person name="Reinhardt R."/>
            <person name="Goesmann A."/>
            <person name="Kraft T."/>
            <person name="Schulz B."/>
            <person name="Stadler P.F."/>
            <person name="Schmidt T."/>
            <person name="Gabaldon T."/>
            <person name="Lehrach H."/>
            <person name="Weisshaar B."/>
            <person name="Himmelbauer H."/>
        </authorList>
    </citation>
    <scope>NUCLEOTIDE SEQUENCE [LARGE SCALE GENOMIC DNA]</scope>
    <source>
        <strain>cv. Viroflay</strain>
        <tissue>Leaf</tissue>
    </source>
</reference>
<reference key="2">
    <citation type="journal article" date="2000" name="J. Biol. Chem.">
        <title>The plastid ribosomal proteins. Identification of all the proteins in the 30S subunit of an organelle ribosome (chloroplast).</title>
        <authorList>
            <person name="Yamaguchi K."/>
            <person name="von Knoblauch K."/>
            <person name="Subramanian A.R."/>
        </authorList>
    </citation>
    <scope>PROTEIN SEQUENCE OF 69-102</scope>
    <scope>SUBUNIT</scope>
    <scope>SUBCELLULAR LOCATION</scope>
    <scope>MASS SPECTROMETRY</scope>
    <source>
        <strain>cv. Alwaro</strain>
        <tissue>Leaf</tissue>
    </source>
</reference>
<reference key="3">
    <citation type="journal article" date="2007" name="Proc. Natl. Acad. Sci. U.S.A.">
        <title>Cryo-EM study of the spinach chloroplast ribosome reveals the structural and functional roles of plastid-specific ribosomal proteins.</title>
        <authorList>
            <person name="Sharma M.R."/>
            <person name="Wilson D.N."/>
            <person name="Datta P.P."/>
            <person name="Barat C."/>
            <person name="Schluenzen F."/>
            <person name="Fucini P."/>
            <person name="Agrawal R.K."/>
        </authorList>
    </citation>
    <scope>STRUCTURE BY ELECTRON MICROSCOPY (9.4 ANGSTROMS)</scope>
</reference>
<reference key="4">
    <citation type="journal article" date="2017" name="EMBO J.">
        <title>The complete structure of the chloroplast 70S ribosome in complex with translation factor pY.</title>
        <authorList>
            <person name="Bieri P."/>
            <person name="Leibundgut M."/>
            <person name="Saurer M."/>
            <person name="Boehringer D."/>
            <person name="Ban N."/>
        </authorList>
    </citation>
    <scope>STRUCTURE BY ELECTRON MICROSCOPY (3.40 ANGSTROMS)</scope>
    <scope>SUBUNIT</scope>
    <scope>SUBCELLULAR LOCATION</scope>
</reference>
<proteinExistence type="evidence at protein level"/>
<dbReference type="EMBL" id="KQ145085">
    <property type="status" value="NOT_ANNOTATED_CDS"/>
    <property type="molecule type" value="Genomic_DNA"/>
</dbReference>
<dbReference type="PDB" id="4V61">
    <property type="method" value="EM"/>
    <property type="resolution" value="9.40 A"/>
    <property type="chains" value="T=71-102"/>
</dbReference>
<dbReference type="PDB" id="5X8R">
    <property type="method" value="EM"/>
    <property type="resolution" value="3.70 A"/>
    <property type="chains" value="t=76-183"/>
</dbReference>
<dbReference type="PDB" id="6ERI">
    <property type="method" value="EM"/>
    <property type="resolution" value="3.00 A"/>
    <property type="chains" value="BT=73-174"/>
</dbReference>
<dbReference type="PDBsum" id="4V61"/>
<dbReference type="PDBsum" id="5X8R"/>
<dbReference type="PDBsum" id="6ERI"/>
<dbReference type="EMDB" id="EMD-3941"/>
<dbReference type="EMDB" id="EMD-6709"/>
<dbReference type="EMDB" id="EMD-6710"/>
<dbReference type="SMR" id="P82130"/>
<dbReference type="STRING" id="3562.P82130"/>
<dbReference type="OrthoDB" id="4825at2759"/>
<dbReference type="Proteomes" id="UP001155700">
    <property type="component" value="Unplaced"/>
</dbReference>
<dbReference type="GO" id="GO:0009507">
    <property type="term" value="C:chloroplast"/>
    <property type="evidence" value="ECO:0007669"/>
    <property type="project" value="UniProtKB-SubCell"/>
</dbReference>
<dbReference type="GO" id="GO:0015935">
    <property type="term" value="C:small ribosomal subunit"/>
    <property type="evidence" value="ECO:0000318"/>
    <property type="project" value="GO_Central"/>
</dbReference>
<dbReference type="GO" id="GO:0070181">
    <property type="term" value="F:small ribosomal subunit rRNA binding"/>
    <property type="evidence" value="ECO:0000318"/>
    <property type="project" value="GO_Central"/>
</dbReference>
<dbReference type="GO" id="GO:0003735">
    <property type="term" value="F:structural constituent of ribosome"/>
    <property type="evidence" value="ECO:0007669"/>
    <property type="project" value="InterPro"/>
</dbReference>
<dbReference type="GO" id="GO:0006412">
    <property type="term" value="P:translation"/>
    <property type="evidence" value="ECO:0007669"/>
    <property type="project" value="InterPro"/>
</dbReference>
<dbReference type="FunFam" id="1.20.58.110:FF:000003">
    <property type="entry name" value="30S ribosomal protein S20, chloroplastic"/>
    <property type="match status" value="1"/>
</dbReference>
<dbReference type="Gene3D" id="1.20.58.110">
    <property type="entry name" value="Ribosomal protein S20"/>
    <property type="match status" value="1"/>
</dbReference>
<dbReference type="HAMAP" id="MF_00500">
    <property type="entry name" value="Ribosomal_bS20"/>
    <property type="match status" value="1"/>
</dbReference>
<dbReference type="InterPro" id="IPR002583">
    <property type="entry name" value="Ribosomal_bS20"/>
</dbReference>
<dbReference type="InterPro" id="IPR036510">
    <property type="entry name" value="Ribosomal_bS20_sf"/>
</dbReference>
<dbReference type="NCBIfam" id="TIGR00029">
    <property type="entry name" value="S20"/>
    <property type="match status" value="1"/>
</dbReference>
<dbReference type="PANTHER" id="PTHR33398">
    <property type="entry name" value="30S RIBOSOMAL PROTEIN S20"/>
    <property type="match status" value="1"/>
</dbReference>
<dbReference type="PANTHER" id="PTHR33398:SF1">
    <property type="entry name" value="SMALL RIBOSOMAL SUBUNIT PROTEIN BS20C"/>
    <property type="match status" value="1"/>
</dbReference>
<dbReference type="Pfam" id="PF01649">
    <property type="entry name" value="Ribosomal_S20p"/>
    <property type="match status" value="1"/>
</dbReference>
<dbReference type="SUPFAM" id="SSF46992">
    <property type="entry name" value="Ribosomal protein S20"/>
    <property type="match status" value="1"/>
</dbReference>